<feature type="chain" id="PRO_1000186397" description="Bifunctional protein GlmU">
    <location>
        <begin position="1"/>
        <end position="459"/>
    </location>
</feature>
<feature type="region of interest" description="Pyrophosphorylase" evidence="1">
    <location>
        <begin position="1"/>
        <end position="230"/>
    </location>
</feature>
<feature type="region of interest" description="Linker" evidence="1">
    <location>
        <begin position="231"/>
        <end position="251"/>
    </location>
</feature>
<feature type="region of interest" description="N-acetyltransferase" evidence="1">
    <location>
        <begin position="252"/>
        <end position="459"/>
    </location>
</feature>
<feature type="active site" description="Proton acceptor" evidence="1">
    <location>
        <position position="363"/>
    </location>
</feature>
<feature type="binding site" evidence="1">
    <location>
        <begin position="9"/>
        <end position="12"/>
    </location>
    <ligand>
        <name>UDP-N-acetyl-alpha-D-glucosamine</name>
        <dbReference type="ChEBI" id="CHEBI:57705"/>
    </ligand>
</feature>
<feature type="binding site" evidence="1">
    <location>
        <position position="23"/>
    </location>
    <ligand>
        <name>UDP-N-acetyl-alpha-D-glucosamine</name>
        <dbReference type="ChEBI" id="CHEBI:57705"/>
    </ligand>
</feature>
<feature type="binding site" evidence="1">
    <location>
        <position position="73"/>
    </location>
    <ligand>
        <name>UDP-N-acetyl-alpha-D-glucosamine</name>
        <dbReference type="ChEBI" id="CHEBI:57705"/>
    </ligand>
</feature>
<feature type="binding site" evidence="1">
    <location>
        <begin position="78"/>
        <end position="79"/>
    </location>
    <ligand>
        <name>UDP-N-acetyl-alpha-D-glucosamine</name>
        <dbReference type="ChEBI" id="CHEBI:57705"/>
    </ligand>
</feature>
<feature type="binding site" evidence="1">
    <location>
        <position position="103"/>
    </location>
    <ligand>
        <name>Mg(2+)</name>
        <dbReference type="ChEBI" id="CHEBI:18420"/>
    </ligand>
</feature>
<feature type="binding site" evidence="1">
    <location>
        <position position="140"/>
    </location>
    <ligand>
        <name>UDP-N-acetyl-alpha-D-glucosamine</name>
        <dbReference type="ChEBI" id="CHEBI:57705"/>
    </ligand>
</feature>
<feature type="binding site" evidence="1">
    <location>
        <position position="155"/>
    </location>
    <ligand>
        <name>UDP-N-acetyl-alpha-D-glucosamine</name>
        <dbReference type="ChEBI" id="CHEBI:57705"/>
    </ligand>
</feature>
<feature type="binding site" evidence="1">
    <location>
        <position position="170"/>
    </location>
    <ligand>
        <name>UDP-N-acetyl-alpha-D-glucosamine</name>
        <dbReference type="ChEBI" id="CHEBI:57705"/>
    </ligand>
</feature>
<feature type="binding site" evidence="1">
    <location>
        <position position="228"/>
    </location>
    <ligand>
        <name>Mg(2+)</name>
        <dbReference type="ChEBI" id="CHEBI:18420"/>
    </ligand>
</feature>
<feature type="binding site" evidence="1">
    <location>
        <position position="228"/>
    </location>
    <ligand>
        <name>UDP-N-acetyl-alpha-D-glucosamine</name>
        <dbReference type="ChEBI" id="CHEBI:57705"/>
    </ligand>
</feature>
<feature type="binding site" evidence="1">
    <location>
        <position position="333"/>
    </location>
    <ligand>
        <name>UDP-N-acetyl-alpha-D-glucosamine</name>
        <dbReference type="ChEBI" id="CHEBI:57705"/>
    </ligand>
</feature>
<feature type="binding site" evidence="1">
    <location>
        <position position="351"/>
    </location>
    <ligand>
        <name>UDP-N-acetyl-alpha-D-glucosamine</name>
        <dbReference type="ChEBI" id="CHEBI:57705"/>
    </ligand>
</feature>
<feature type="binding site" evidence="1">
    <location>
        <position position="366"/>
    </location>
    <ligand>
        <name>UDP-N-acetyl-alpha-D-glucosamine</name>
        <dbReference type="ChEBI" id="CHEBI:57705"/>
    </ligand>
</feature>
<feature type="binding site" evidence="1">
    <location>
        <position position="377"/>
    </location>
    <ligand>
        <name>UDP-N-acetyl-alpha-D-glucosamine</name>
        <dbReference type="ChEBI" id="CHEBI:57705"/>
    </ligand>
</feature>
<feature type="binding site" evidence="1">
    <location>
        <begin position="386"/>
        <end position="387"/>
    </location>
    <ligand>
        <name>acetyl-CoA</name>
        <dbReference type="ChEBI" id="CHEBI:57288"/>
    </ligand>
</feature>
<feature type="binding site" evidence="1">
    <location>
        <position position="423"/>
    </location>
    <ligand>
        <name>acetyl-CoA</name>
        <dbReference type="ChEBI" id="CHEBI:57288"/>
    </ligand>
</feature>
<feature type="binding site" evidence="1">
    <location>
        <position position="440"/>
    </location>
    <ligand>
        <name>acetyl-CoA</name>
        <dbReference type="ChEBI" id="CHEBI:57288"/>
    </ligand>
</feature>
<name>GLMU_BACAC</name>
<organism>
    <name type="scientific">Bacillus anthracis (strain CDC 684 / NRRL 3495)</name>
    <dbReference type="NCBI Taxonomy" id="568206"/>
    <lineage>
        <taxon>Bacteria</taxon>
        <taxon>Bacillati</taxon>
        <taxon>Bacillota</taxon>
        <taxon>Bacilli</taxon>
        <taxon>Bacillales</taxon>
        <taxon>Bacillaceae</taxon>
        <taxon>Bacillus</taxon>
        <taxon>Bacillus cereus group</taxon>
    </lineage>
</organism>
<accession>C3LJ22</accession>
<comment type="function">
    <text evidence="1">Catalyzes the last two sequential reactions in the de novo biosynthetic pathway for UDP-N-acetylglucosamine (UDP-GlcNAc). The C-terminal domain catalyzes the transfer of acetyl group from acetyl coenzyme A to glucosamine-1-phosphate (GlcN-1-P) to produce N-acetylglucosamine-1-phosphate (GlcNAc-1-P), which is converted into UDP-GlcNAc by the transfer of uridine 5-monophosphate (from uridine 5-triphosphate), a reaction catalyzed by the N-terminal domain.</text>
</comment>
<comment type="catalytic activity">
    <reaction evidence="1">
        <text>alpha-D-glucosamine 1-phosphate + acetyl-CoA = N-acetyl-alpha-D-glucosamine 1-phosphate + CoA + H(+)</text>
        <dbReference type="Rhea" id="RHEA:13725"/>
        <dbReference type="ChEBI" id="CHEBI:15378"/>
        <dbReference type="ChEBI" id="CHEBI:57287"/>
        <dbReference type="ChEBI" id="CHEBI:57288"/>
        <dbReference type="ChEBI" id="CHEBI:57776"/>
        <dbReference type="ChEBI" id="CHEBI:58516"/>
        <dbReference type="EC" id="2.3.1.157"/>
    </reaction>
</comment>
<comment type="catalytic activity">
    <reaction evidence="1">
        <text>N-acetyl-alpha-D-glucosamine 1-phosphate + UTP + H(+) = UDP-N-acetyl-alpha-D-glucosamine + diphosphate</text>
        <dbReference type="Rhea" id="RHEA:13509"/>
        <dbReference type="ChEBI" id="CHEBI:15378"/>
        <dbReference type="ChEBI" id="CHEBI:33019"/>
        <dbReference type="ChEBI" id="CHEBI:46398"/>
        <dbReference type="ChEBI" id="CHEBI:57705"/>
        <dbReference type="ChEBI" id="CHEBI:57776"/>
        <dbReference type="EC" id="2.7.7.23"/>
    </reaction>
</comment>
<comment type="cofactor">
    <cofactor evidence="1">
        <name>Mg(2+)</name>
        <dbReference type="ChEBI" id="CHEBI:18420"/>
    </cofactor>
    <text evidence="1">Binds 1 Mg(2+) ion per subunit.</text>
</comment>
<comment type="pathway">
    <text evidence="1">Nucleotide-sugar biosynthesis; UDP-N-acetyl-alpha-D-glucosamine biosynthesis; N-acetyl-alpha-D-glucosamine 1-phosphate from alpha-D-glucosamine 6-phosphate (route II): step 2/2.</text>
</comment>
<comment type="pathway">
    <text evidence="1">Nucleotide-sugar biosynthesis; UDP-N-acetyl-alpha-D-glucosamine biosynthesis; UDP-N-acetyl-alpha-D-glucosamine from N-acetyl-alpha-D-glucosamine 1-phosphate: step 1/1.</text>
</comment>
<comment type="pathway">
    <text evidence="1">Bacterial outer membrane biogenesis; LPS lipid A biosynthesis.</text>
</comment>
<comment type="subunit">
    <text evidence="1">Homotrimer.</text>
</comment>
<comment type="subcellular location">
    <subcellularLocation>
        <location evidence="1">Cytoplasm</location>
    </subcellularLocation>
</comment>
<comment type="similarity">
    <text evidence="1">In the N-terminal section; belongs to the N-acetylglucosamine-1-phosphate uridyltransferase family.</text>
</comment>
<comment type="similarity">
    <text evidence="1">In the C-terminal section; belongs to the transferase hexapeptide repeat family.</text>
</comment>
<proteinExistence type="inferred from homology"/>
<protein>
    <recommendedName>
        <fullName evidence="1">Bifunctional protein GlmU</fullName>
    </recommendedName>
    <domain>
        <recommendedName>
            <fullName evidence="1">UDP-N-acetylglucosamine pyrophosphorylase</fullName>
            <ecNumber evidence="1">2.7.7.23</ecNumber>
        </recommendedName>
        <alternativeName>
            <fullName evidence="1">N-acetylglucosamine-1-phosphate uridyltransferase</fullName>
        </alternativeName>
    </domain>
    <domain>
        <recommendedName>
            <fullName evidence="1">Glucosamine-1-phosphate N-acetyltransferase</fullName>
            <ecNumber evidence="1">2.3.1.157</ecNumber>
        </recommendedName>
    </domain>
</protein>
<sequence length="459" mass="49423">MSNRFAVILAAGKGTRMKSKLYKVLHPVCGKPMVQHVVDQVSQLGLQKLVTVVGHGAEMVQEQLGNVSEFALQAEQLGTAHAVDQAAGVLANEEGTTLVICGDTPLITAETMEALLQQHKEAGAMATVLTAYIEEPAGYGRIVRNENGHVEKIVEHKDANEKELAIKEINTGTYCFDNKALFASLSKVSNDNVQGEYYLPDVIEILKNEGHIVSAYQTEHFDETLGVNDRVALSQAEIIMKNRINRKNMVNGVTIIDPSNTYISADAIIGSDTVLHPGTIIEGNTVIGSDCEIGPHTVIRDSEIGDRTTIRQSTVHDSKLGTEVSVGPFAHIRPDSVIGDEVRVGNFVEIKKTVFGNRSKASHLSYIGDAQVGEDVNLGCGSITVNYDGKNKFKTVIGNGVFIGCNSNLVAPVTVEDGAYVAAGSTITENVPSKALSVARARQVNKEDYVDQLLNKKKS</sequence>
<dbReference type="EC" id="2.7.7.23" evidence="1"/>
<dbReference type="EC" id="2.3.1.157" evidence="1"/>
<dbReference type="EMBL" id="CP001215">
    <property type="protein sequence ID" value="ACP17265.1"/>
    <property type="molecule type" value="Genomic_DNA"/>
</dbReference>
<dbReference type="RefSeq" id="WP_000071032.1">
    <property type="nucleotide sequence ID" value="NC_012581.1"/>
</dbReference>
<dbReference type="SMR" id="C3LJ22"/>
<dbReference type="GeneID" id="45020089"/>
<dbReference type="KEGG" id="bah:BAMEG_0059"/>
<dbReference type="HOGENOM" id="CLU_029499_15_2_9"/>
<dbReference type="UniPathway" id="UPA00113">
    <property type="reaction ID" value="UER00532"/>
</dbReference>
<dbReference type="UniPathway" id="UPA00113">
    <property type="reaction ID" value="UER00533"/>
</dbReference>
<dbReference type="UniPathway" id="UPA00973"/>
<dbReference type="GO" id="GO:0005737">
    <property type="term" value="C:cytoplasm"/>
    <property type="evidence" value="ECO:0007669"/>
    <property type="project" value="UniProtKB-SubCell"/>
</dbReference>
<dbReference type="GO" id="GO:0016020">
    <property type="term" value="C:membrane"/>
    <property type="evidence" value="ECO:0007669"/>
    <property type="project" value="GOC"/>
</dbReference>
<dbReference type="GO" id="GO:0019134">
    <property type="term" value="F:glucosamine-1-phosphate N-acetyltransferase activity"/>
    <property type="evidence" value="ECO:0007669"/>
    <property type="project" value="UniProtKB-UniRule"/>
</dbReference>
<dbReference type="GO" id="GO:0000287">
    <property type="term" value="F:magnesium ion binding"/>
    <property type="evidence" value="ECO:0007669"/>
    <property type="project" value="UniProtKB-UniRule"/>
</dbReference>
<dbReference type="GO" id="GO:0003977">
    <property type="term" value="F:UDP-N-acetylglucosamine diphosphorylase activity"/>
    <property type="evidence" value="ECO:0007669"/>
    <property type="project" value="UniProtKB-UniRule"/>
</dbReference>
<dbReference type="GO" id="GO:0000902">
    <property type="term" value="P:cell morphogenesis"/>
    <property type="evidence" value="ECO:0007669"/>
    <property type="project" value="UniProtKB-UniRule"/>
</dbReference>
<dbReference type="GO" id="GO:0071555">
    <property type="term" value="P:cell wall organization"/>
    <property type="evidence" value="ECO:0007669"/>
    <property type="project" value="UniProtKB-KW"/>
</dbReference>
<dbReference type="GO" id="GO:0009245">
    <property type="term" value="P:lipid A biosynthetic process"/>
    <property type="evidence" value="ECO:0007669"/>
    <property type="project" value="UniProtKB-UniRule"/>
</dbReference>
<dbReference type="GO" id="GO:0009252">
    <property type="term" value="P:peptidoglycan biosynthetic process"/>
    <property type="evidence" value="ECO:0007669"/>
    <property type="project" value="UniProtKB-UniRule"/>
</dbReference>
<dbReference type="GO" id="GO:0008360">
    <property type="term" value="P:regulation of cell shape"/>
    <property type="evidence" value="ECO:0007669"/>
    <property type="project" value="UniProtKB-KW"/>
</dbReference>
<dbReference type="GO" id="GO:0006048">
    <property type="term" value="P:UDP-N-acetylglucosamine biosynthetic process"/>
    <property type="evidence" value="ECO:0007669"/>
    <property type="project" value="UniProtKB-UniPathway"/>
</dbReference>
<dbReference type="CDD" id="cd02540">
    <property type="entry name" value="GT2_GlmU_N_bac"/>
    <property type="match status" value="1"/>
</dbReference>
<dbReference type="CDD" id="cd03353">
    <property type="entry name" value="LbH_GlmU_C"/>
    <property type="match status" value="1"/>
</dbReference>
<dbReference type="FunFam" id="2.160.10.10:FF:000016">
    <property type="entry name" value="Bifunctional protein GlmU"/>
    <property type="match status" value="1"/>
</dbReference>
<dbReference type="FunFam" id="3.90.550.10:FF:000006">
    <property type="entry name" value="Bifunctional protein GlmU"/>
    <property type="match status" value="1"/>
</dbReference>
<dbReference type="Gene3D" id="2.160.10.10">
    <property type="entry name" value="Hexapeptide repeat proteins"/>
    <property type="match status" value="1"/>
</dbReference>
<dbReference type="Gene3D" id="3.90.550.10">
    <property type="entry name" value="Spore Coat Polysaccharide Biosynthesis Protein SpsA, Chain A"/>
    <property type="match status" value="1"/>
</dbReference>
<dbReference type="HAMAP" id="MF_01631">
    <property type="entry name" value="GlmU"/>
    <property type="match status" value="1"/>
</dbReference>
<dbReference type="InterPro" id="IPR005882">
    <property type="entry name" value="Bifunctional_GlmU"/>
</dbReference>
<dbReference type="InterPro" id="IPR050065">
    <property type="entry name" value="GlmU-like"/>
</dbReference>
<dbReference type="InterPro" id="IPR038009">
    <property type="entry name" value="GlmU_C_LbH"/>
</dbReference>
<dbReference type="InterPro" id="IPR001451">
    <property type="entry name" value="Hexapep"/>
</dbReference>
<dbReference type="InterPro" id="IPR018357">
    <property type="entry name" value="Hexapep_transf_CS"/>
</dbReference>
<dbReference type="InterPro" id="IPR005835">
    <property type="entry name" value="NTP_transferase_dom"/>
</dbReference>
<dbReference type="InterPro" id="IPR029044">
    <property type="entry name" value="Nucleotide-diphossugar_trans"/>
</dbReference>
<dbReference type="InterPro" id="IPR011004">
    <property type="entry name" value="Trimer_LpxA-like_sf"/>
</dbReference>
<dbReference type="NCBIfam" id="TIGR01173">
    <property type="entry name" value="glmU"/>
    <property type="match status" value="1"/>
</dbReference>
<dbReference type="NCBIfam" id="NF010934">
    <property type="entry name" value="PRK14354.1"/>
    <property type="match status" value="1"/>
</dbReference>
<dbReference type="PANTHER" id="PTHR43584:SF3">
    <property type="entry name" value="BIFUNCTIONAL PROTEIN GLMU"/>
    <property type="match status" value="1"/>
</dbReference>
<dbReference type="PANTHER" id="PTHR43584">
    <property type="entry name" value="NUCLEOTIDYL TRANSFERASE"/>
    <property type="match status" value="1"/>
</dbReference>
<dbReference type="Pfam" id="PF00132">
    <property type="entry name" value="Hexapep"/>
    <property type="match status" value="3"/>
</dbReference>
<dbReference type="Pfam" id="PF00483">
    <property type="entry name" value="NTP_transferase"/>
    <property type="match status" value="1"/>
</dbReference>
<dbReference type="SUPFAM" id="SSF53448">
    <property type="entry name" value="Nucleotide-diphospho-sugar transferases"/>
    <property type="match status" value="1"/>
</dbReference>
<dbReference type="SUPFAM" id="SSF51161">
    <property type="entry name" value="Trimeric LpxA-like enzymes"/>
    <property type="match status" value="1"/>
</dbReference>
<dbReference type="PROSITE" id="PS00101">
    <property type="entry name" value="HEXAPEP_TRANSFERASES"/>
    <property type="match status" value="1"/>
</dbReference>
<evidence type="ECO:0000255" key="1">
    <source>
        <dbReference type="HAMAP-Rule" id="MF_01631"/>
    </source>
</evidence>
<reference key="1">
    <citation type="submission" date="2008-10" db="EMBL/GenBank/DDBJ databases">
        <title>Genome sequence of Bacillus anthracis str. CDC 684.</title>
        <authorList>
            <person name="Dodson R.J."/>
            <person name="Munk A.C."/>
            <person name="Brettin T."/>
            <person name="Bruce D."/>
            <person name="Detter C."/>
            <person name="Tapia R."/>
            <person name="Han C."/>
            <person name="Sutton G."/>
            <person name="Sims D."/>
        </authorList>
    </citation>
    <scope>NUCLEOTIDE SEQUENCE [LARGE SCALE GENOMIC DNA]</scope>
    <source>
        <strain>CDC 684 / NRRL 3495</strain>
    </source>
</reference>
<gene>
    <name evidence="1" type="primary">glmU</name>
    <name type="ordered locus">BAMEG_0059</name>
</gene>
<keyword id="KW-0012">Acyltransferase</keyword>
<keyword id="KW-0133">Cell shape</keyword>
<keyword id="KW-0961">Cell wall biogenesis/degradation</keyword>
<keyword id="KW-0963">Cytoplasm</keyword>
<keyword id="KW-0460">Magnesium</keyword>
<keyword id="KW-0479">Metal-binding</keyword>
<keyword id="KW-0511">Multifunctional enzyme</keyword>
<keyword id="KW-0548">Nucleotidyltransferase</keyword>
<keyword id="KW-0573">Peptidoglycan synthesis</keyword>
<keyword id="KW-0677">Repeat</keyword>
<keyword id="KW-0808">Transferase</keyword>